<sequence>MKTKILSLANEEVGEISLNEDIFAVEFIRDDIIKQVIDWQRAKAMSGNHKTKTVSEVLGTTKKPFKQKGTGNARQGSLRSVQMRGGGVAHGPRVRSHATKLPKKVRKLGLIHALSEKCAEGKLLVIDSLKLDKPKTSALVNILNKFQGKSFFVIDGNEVDINFSLAAKNIYNTVIVPQIGANVYDIIRHEYVLLSQEAVSVLEERLR</sequence>
<name>RL4_RICCN</name>
<keyword id="KW-0687">Ribonucleoprotein</keyword>
<keyword id="KW-0689">Ribosomal protein</keyword>
<keyword id="KW-0694">RNA-binding</keyword>
<keyword id="KW-0699">rRNA-binding</keyword>
<gene>
    <name evidence="1" type="primary">rplD</name>
    <name type="ordered locus">RC1005</name>
</gene>
<dbReference type="EMBL" id="AE006914">
    <property type="protein sequence ID" value="AAL03543.1"/>
    <property type="molecule type" value="Genomic_DNA"/>
</dbReference>
<dbReference type="PIR" id="E97825">
    <property type="entry name" value="E97825"/>
</dbReference>
<dbReference type="RefSeq" id="WP_004997785.1">
    <property type="nucleotide sequence ID" value="NC_003103.1"/>
</dbReference>
<dbReference type="SMR" id="Q92GW7"/>
<dbReference type="GeneID" id="95361485"/>
<dbReference type="KEGG" id="rco:RC1005"/>
<dbReference type="HOGENOM" id="CLU_041575_5_1_5"/>
<dbReference type="Proteomes" id="UP000000816">
    <property type="component" value="Chromosome"/>
</dbReference>
<dbReference type="GO" id="GO:1990904">
    <property type="term" value="C:ribonucleoprotein complex"/>
    <property type="evidence" value="ECO:0007669"/>
    <property type="project" value="UniProtKB-KW"/>
</dbReference>
<dbReference type="GO" id="GO:0005840">
    <property type="term" value="C:ribosome"/>
    <property type="evidence" value="ECO:0007669"/>
    <property type="project" value="UniProtKB-KW"/>
</dbReference>
<dbReference type="GO" id="GO:0019843">
    <property type="term" value="F:rRNA binding"/>
    <property type="evidence" value="ECO:0007669"/>
    <property type="project" value="UniProtKB-UniRule"/>
</dbReference>
<dbReference type="GO" id="GO:0003735">
    <property type="term" value="F:structural constituent of ribosome"/>
    <property type="evidence" value="ECO:0007669"/>
    <property type="project" value="InterPro"/>
</dbReference>
<dbReference type="GO" id="GO:0006412">
    <property type="term" value="P:translation"/>
    <property type="evidence" value="ECO:0007669"/>
    <property type="project" value="UniProtKB-UniRule"/>
</dbReference>
<dbReference type="FunFam" id="3.40.1370.10:FF:000015">
    <property type="entry name" value="50S ribosomal protein L4"/>
    <property type="match status" value="1"/>
</dbReference>
<dbReference type="Gene3D" id="3.40.1370.10">
    <property type="match status" value="1"/>
</dbReference>
<dbReference type="HAMAP" id="MF_01328_B">
    <property type="entry name" value="Ribosomal_uL4_B"/>
    <property type="match status" value="1"/>
</dbReference>
<dbReference type="InterPro" id="IPR002136">
    <property type="entry name" value="Ribosomal_uL4"/>
</dbReference>
<dbReference type="InterPro" id="IPR013005">
    <property type="entry name" value="Ribosomal_uL4-like"/>
</dbReference>
<dbReference type="InterPro" id="IPR023574">
    <property type="entry name" value="Ribosomal_uL4_dom_sf"/>
</dbReference>
<dbReference type="NCBIfam" id="TIGR03953">
    <property type="entry name" value="rplD_bact"/>
    <property type="match status" value="1"/>
</dbReference>
<dbReference type="PANTHER" id="PTHR10746">
    <property type="entry name" value="50S RIBOSOMAL PROTEIN L4"/>
    <property type="match status" value="1"/>
</dbReference>
<dbReference type="PANTHER" id="PTHR10746:SF6">
    <property type="entry name" value="LARGE RIBOSOMAL SUBUNIT PROTEIN UL4M"/>
    <property type="match status" value="1"/>
</dbReference>
<dbReference type="Pfam" id="PF00573">
    <property type="entry name" value="Ribosomal_L4"/>
    <property type="match status" value="1"/>
</dbReference>
<dbReference type="SUPFAM" id="SSF52166">
    <property type="entry name" value="Ribosomal protein L4"/>
    <property type="match status" value="1"/>
</dbReference>
<organism>
    <name type="scientific">Rickettsia conorii (strain ATCC VR-613 / Malish 7)</name>
    <dbReference type="NCBI Taxonomy" id="272944"/>
    <lineage>
        <taxon>Bacteria</taxon>
        <taxon>Pseudomonadati</taxon>
        <taxon>Pseudomonadota</taxon>
        <taxon>Alphaproteobacteria</taxon>
        <taxon>Rickettsiales</taxon>
        <taxon>Rickettsiaceae</taxon>
        <taxon>Rickettsieae</taxon>
        <taxon>Rickettsia</taxon>
        <taxon>spotted fever group</taxon>
    </lineage>
</organism>
<accession>Q92GW7</accession>
<comment type="function">
    <text evidence="1">One of the primary rRNA binding proteins, this protein initially binds near the 5'-end of the 23S rRNA. It is important during the early stages of 50S assembly. It makes multiple contacts with different domains of the 23S rRNA in the assembled 50S subunit and ribosome.</text>
</comment>
<comment type="function">
    <text evidence="1">Forms part of the polypeptide exit tunnel.</text>
</comment>
<comment type="subunit">
    <text evidence="1">Part of the 50S ribosomal subunit.</text>
</comment>
<comment type="similarity">
    <text evidence="1">Belongs to the universal ribosomal protein uL4 family.</text>
</comment>
<reference key="1">
    <citation type="journal article" date="2001" name="Science">
        <title>Mechanisms of evolution in Rickettsia conorii and R. prowazekii.</title>
        <authorList>
            <person name="Ogata H."/>
            <person name="Audic S."/>
            <person name="Renesto-Audiffren P."/>
            <person name="Fournier P.-E."/>
            <person name="Barbe V."/>
            <person name="Samson D."/>
            <person name="Roux V."/>
            <person name="Cossart P."/>
            <person name="Weissenbach J."/>
            <person name="Claverie J.-M."/>
            <person name="Raoult D."/>
        </authorList>
    </citation>
    <scope>NUCLEOTIDE SEQUENCE [LARGE SCALE GENOMIC DNA]</scope>
    <source>
        <strain>ATCC VR-613 / Malish 7</strain>
    </source>
</reference>
<proteinExistence type="inferred from homology"/>
<protein>
    <recommendedName>
        <fullName evidence="1">Large ribosomal subunit protein uL4</fullName>
    </recommendedName>
    <alternativeName>
        <fullName evidence="2">50S ribosomal protein L4</fullName>
    </alternativeName>
</protein>
<feature type="chain" id="PRO_0000129267" description="Large ribosomal subunit protein uL4">
    <location>
        <begin position="1"/>
        <end position="207"/>
    </location>
</feature>
<evidence type="ECO:0000255" key="1">
    <source>
        <dbReference type="HAMAP-Rule" id="MF_01328"/>
    </source>
</evidence>
<evidence type="ECO:0000305" key="2"/>